<dbReference type="EC" id="2.1.1.45" evidence="1"/>
<dbReference type="EMBL" id="M19653">
    <property type="protein sequence ID" value="AAA25255.1"/>
    <property type="status" value="ALT_INIT"/>
    <property type="molecule type" value="Genomic_DNA"/>
</dbReference>
<dbReference type="PIR" id="A29817">
    <property type="entry name" value="SYLBT"/>
</dbReference>
<dbReference type="PDB" id="1BO7">
    <property type="method" value="X-ray"/>
    <property type="resolution" value="2.40 A"/>
    <property type="chains" value="A=1-316"/>
</dbReference>
<dbReference type="PDB" id="1BO8">
    <property type="method" value="X-ray"/>
    <property type="resolution" value="2.40 A"/>
    <property type="chains" value="A=1-316"/>
</dbReference>
<dbReference type="PDB" id="1BP0">
    <property type="method" value="X-ray"/>
    <property type="resolution" value="2.40 A"/>
    <property type="chains" value="A=1-316"/>
</dbReference>
<dbReference type="PDB" id="1BP6">
    <property type="method" value="X-ray"/>
    <property type="resolution" value="2.40 A"/>
    <property type="chains" value="A=1-316"/>
</dbReference>
<dbReference type="PDB" id="1BPJ">
    <property type="method" value="X-ray"/>
    <property type="resolution" value="2.40 A"/>
    <property type="chains" value="A=1-316"/>
</dbReference>
<dbReference type="PDB" id="1JMF">
    <property type="method" value="X-ray"/>
    <property type="resolution" value="2.50 A"/>
    <property type="chains" value="A=1-316"/>
</dbReference>
<dbReference type="PDB" id="1JMG">
    <property type="method" value="X-ray"/>
    <property type="resolution" value="2.20 A"/>
    <property type="chains" value="A=1-316"/>
</dbReference>
<dbReference type="PDB" id="1JMH">
    <property type="method" value="X-ray"/>
    <property type="resolution" value="2.50 A"/>
    <property type="chains" value="A=1-316"/>
</dbReference>
<dbReference type="PDB" id="1JMI">
    <property type="method" value="X-ray"/>
    <property type="resolution" value="2.50 A"/>
    <property type="chains" value="A=1-316"/>
</dbReference>
<dbReference type="PDB" id="1LCA">
    <property type="method" value="X-ray"/>
    <property type="resolution" value="2.50 A"/>
    <property type="chains" value="A=1-316"/>
</dbReference>
<dbReference type="PDB" id="1LCB">
    <property type="method" value="X-ray"/>
    <property type="resolution" value="2.50 A"/>
    <property type="chains" value="A=1-316"/>
</dbReference>
<dbReference type="PDB" id="1LCE">
    <property type="method" value="X-ray"/>
    <property type="resolution" value="2.50 A"/>
    <property type="chains" value="A=1-316"/>
</dbReference>
<dbReference type="PDB" id="1NJA">
    <property type="method" value="X-ray"/>
    <property type="resolution" value="2.50 A"/>
    <property type="chains" value="A=1-316"/>
</dbReference>
<dbReference type="PDB" id="1NJB">
    <property type="method" value="X-ray"/>
    <property type="resolution" value="2.74 A"/>
    <property type="chains" value="A=1-316"/>
</dbReference>
<dbReference type="PDB" id="1NJC">
    <property type="method" value="X-ray"/>
    <property type="resolution" value="2.50 A"/>
    <property type="chains" value="A=1-316"/>
</dbReference>
<dbReference type="PDB" id="1NJD">
    <property type="method" value="X-ray"/>
    <property type="resolution" value="2.20 A"/>
    <property type="chains" value="A=1-316"/>
</dbReference>
<dbReference type="PDB" id="1NJE">
    <property type="method" value="X-ray"/>
    <property type="resolution" value="2.30 A"/>
    <property type="chains" value="A=1-316"/>
</dbReference>
<dbReference type="PDB" id="1TDA">
    <property type="method" value="X-ray"/>
    <property type="resolution" value="3.09 A"/>
    <property type="chains" value="A=1-315"/>
</dbReference>
<dbReference type="PDB" id="1TDB">
    <property type="method" value="X-ray"/>
    <property type="resolution" value="2.65 A"/>
    <property type="chains" value="A=1-315"/>
</dbReference>
<dbReference type="PDB" id="1TDC">
    <property type="method" value="X-ray"/>
    <property type="resolution" value="2.65 A"/>
    <property type="chains" value="A=1-315"/>
</dbReference>
<dbReference type="PDB" id="1THY">
    <property type="method" value="X-ray"/>
    <property type="resolution" value="2.90 A"/>
    <property type="chains" value="A=1-316"/>
</dbReference>
<dbReference type="PDB" id="1TSL">
    <property type="method" value="X-ray"/>
    <property type="resolution" value="2.50 A"/>
    <property type="chains" value="A=1-316"/>
</dbReference>
<dbReference type="PDB" id="1TSM">
    <property type="method" value="X-ray"/>
    <property type="resolution" value="3.00 A"/>
    <property type="chains" value="A=1-316"/>
</dbReference>
<dbReference type="PDB" id="1TSV">
    <property type="method" value="X-ray"/>
    <property type="resolution" value="2.90 A"/>
    <property type="chains" value="A=1-316"/>
</dbReference>
<dbReference type="PDB" id="1TSW">
    <property type="method" value="X-ray"/>
    <property type="resolution" value="2.50 A"/>
    <property type="chains" value="A=1-316"/>
</dbReference>
<dbReference type="PDB" id="1TSX">
    <property type="method" value="X-ray"/>
    <property type="resolution" value="2.50 A"/>
    <property type="chains" value="A=1-316"/>
</dbReference>
<dbReference type="PDB" id="1TSY">
    <property type="method" value="X-ray"/>
    <property type="resolution" value="2.20 A"/>
    <property type="chains" value="A=1-316"/>
</dbReference>
<dbReference type="PDB" id="1TSZ">
    <property type="method" value="X-ray"/>
    <property type="resolution" value="2.75 A"/>
    <property type="chains" value="A=1-316"/>
</dbReference>
<dbReference type="PDB" id="1TVU">
    <property type="method" value="X-ray"/>
    <property type="resolution" value="2.50 A"/>
    <property type="chains" value="A=1-316"/>
</dbReference>
<dbReference type="PDB" id="1TVV">
    <property type="method" value="X-ray"/>
    <property type="resolution" value="2.30 A"/>
    <property type="chains" value="A=1-316"/>
</dbReference>
<dbReference type="PDB" id="1TVW">
    <property type="method" value="X-ray"/>
    <property type="resolution" value="2.50 A"/>
    <property type="chains" value="A=1-316"/>
</dbReference>
<dbReference type="PDB" id="1VZA">
    <property type="method" value="X-ray"/>
    <property type="resolution" value="2.50 A"/>
    <property type="chains" value="A=1-316"/>
</dbReference>
<dbReference type="PDB" id="1VZB">
    <property type="method" value="X-ray"/>
    <property type="resolution" value="2.50 A"/>
    <property type="chains" value="A=1-316"/>
</dbReference>
<dbReference type="PDB" id="1VZC">
    <property type="method" value="X-ray"/>
    <property type="resolution" value="2.50 A"/>
    <property type="chains" value="A=1-316"/>
</dbReference>
<dbReference type="PDB" id="1VZD">
    <property type="method" value="X-ray"/>
    <property type="resolution" value="2.50 A"/>
    <property type="chains" value="A=1-316"/>
</dbReference>
<dbReference type="PDB" id="1VZE">
    <property type="method" value="X-ray"/>
    <property type="resolution" value="2.30 A"/>
    <property type="chains" value="A=1-316"/>
</dbReference>
<dbReference type="PDB" id="2G86">
    <property type="method" value="X-ray"/>
    <property type="resolution" value="2.40 A"/>
    <property type="chains" value="A=1-316"/>
</dbReference>
<dbReference type="PDB" id="2G89">
    <property type="method" value="X-ray"/>
    <property type="resolution" value="2.50 A"/>
    <property type="chains" value="A=1-316"/>
</dbReference>
<dbReference type="PDB" id="2G8A">
    <property type="method" value="X-ray"/>
    <property type="resolution" value="2.40 A"/>
    <property type="chains" value="A=1-316"/>
</dbReference>
<dbReference type="PDB" id="2G8D">
    <property type="method" value="X-ray"/>
    <property type="resolution" value="2.40 A"/>
    <property type="chains" value="A=1-316"/>
</dbReference>
<dbReference type="PDB" id="2TDD">
    <property type="method" value="X-ray"/>
    <property type="resolution" value="2.70 A"/>
    <property type="chains" value="A=1-315"/>
</dbReference>
<dbReference type="PDB" id="2TDM">
    <property type="method" value="X-ray"/>
    <property type="resolution" value="2.55 A"/>
    <property type="chains" value="A=1-316"/>
</dbReference>
<dbReference type="PDB" id="3BNZ">
    <property type="method" value="X-ray"/>
    <property type="resolution" value="2.60 A"/>
    <property type="chains" value="A=1-316"/>
</dbReference>
<dbReference type="PDB" id="3BYX">
    <property type="method" value="X-ray"/>
    <property type="resolution" value="2.40 A"/>
    <property type="chains" value="A=1-316"/>
</dbReference>
<dbReference type="PDB" id="3BZ0">
    <property type="method" value="X-ray"/>
    <property type="resolution" value="2.70 A"/>
    <property type="chains" value="A=1-316"/>
</dbReference>
<dbReference type="PDB" id="3C06">
    <property type="method" value="X-ray"/>
    <property type="resolution" value="2.60 A"/>
    <property type="chains" value="A=1-316"/>
</dbReference>
<dbReference type="PDB" id="3C0A">
    <property type="method" value="X-ray"/>
    <property type="resolution" value="2.40 A"/>
    <property type="chains" value="A=1-316"/>
</dbReference>
<dbReference type="PDB" id="3IJZ">
    <property type="method" value="X-ray"/>
    <property type="resolution" value="2.21 A"/>
    <property type="chains" value="A=1-316"/>
</dbReference>
<dbReference type="PDB" id="3IK0">
    <property type="method" value="X-ray"/>
    <property type="resolution" value="2.10 A"/>
    <property type="chains" value="A=1-316"/>
</dbReference>
<dbReference type="PDB" id="3IK1">
    <property type="method" value="X-ray"/>
    <property type="resolution" value="2.25 A"/>
    <property type="chains" value="A=1-316"/>
</dbReference>
<dbReference type="PDB" id="4TMS">
    <property type="method" value="X-ray"/>
    <property type="resolution" value="2.35 A"/>
    <property type="chains" value="A=1-316"/>
</dbReference>
<dbReference type="PDBsum" id="1BO7"/>
<dbReference type="PDBsum" id="1BO8"/>
<dbReference type="PDBsum" id="1BP0"/>
<dbReference type="PDBsum" id="1BP6"/>
<dbReference type="PDBsum" id="1BPJ"/>
<dbReference type="PDBsum" id="1JMF"/>
<dbReference type="PDBsum" id="1JMG"/>
<dbReference type="PDBsum" id="1JMH"/>
<dbReference type="PDBsum" id="1JMI"/>
<dbReference type="PDBsum" id="1LCA"/>
<dbReference type="PDBsum" id="1LCB"/>
<dbReference type="PDBsum" id="1LCE"/>
<dbReference type="PDBsum" id="1NJA"/>
<dbReference type="PDBsum" id="1NJB"/>
<dbReference type="PDBsum" id="1NJC"/>
<dbReference type="PDBsum" id="1NJD"/>
<dbReference type="PDBsum" id="1NJE"/>
<dbReference type="PDBsum" id="1TDA"/>
<dbReference type="PDBsum" id="1TDB"/>
<dbReference type="PDBsum" id="1TDC"/>
<dbReference type="PDBsum" id="1THY"/>
<dbReference type="PDBsum" id="1TSL"/>
<dbReference type="PDBsum" id="1TSM"/>
<dbReference type="PDBsum" id="1TSV"/>
<dbReference type="PDBsum" id="1TSW"/>
<dbReference type="PDBsum" id="1TSX"/>
<dbReference type="PDBsum" id="1TSY"/>
<dbReference type="PDBsum" id="1TSZ"/>
<dbReference type="PDBsum" id="1TVU"/>
<dbReference type="PDBsum" id="1TVV"/>
<dbReference type="PDBsum" id="1TVW"/>
<dbReference type="PDBsum" id="1VZA"/>
<dbReference type="PDBsum" id="1VZB"/>
<dbReference type="PDBsum" id="1VZC"/>
<dbReference type="PDBsum" id="1VZD"/>
<dbReference type="PDBsum" id="1VZE"/>
<dbReference type="PDBsum" id="2G86"/>
<dbReference type="PDBsum" id="2G89"/>
<dbReference type="PDBsum" id="2G8A"/>
<dbReference type="PDBsum" id="2G8D"/>
<dbReference type="PDBsum" id="2TDD"/>
<dbReference type="PDBsum" id="2TDM"/>
<dbReference type="PDBsum" id="3BNZ"/>
<dbReference type="PDBsum" id="3BYX"/>
<dbReference type="PDBsum" id="3BZ0"/>
<dbReference type="PDBsum" id="3C06"/>
<dbReference type="PDBsum" id="3C0A"/>
<dbReference type="PDBsum" id="3IJZ"/>
<dbReference type="PDBsum" id="3IK0"/>
<dbReference type="PDBsum" id="3IK1"/>
<dbReference type="PDBsum" id="4TMS"/>
<dbReference type="SMR" id="P00469"/>
<dbReference type="STRING" id="1582.AAW28_04545"/>
<dbReference type="BindingDB" id="P00469"/>
<dbReference type="ChEMBL" id="CHEMBL5328"/>
<dbReference type="DrugBank" id="DB03541">
    <property type="generic name" value="10-Propargyl-5,8-Dideazafolic Acid"/>
</dbReference>
<dbReference type="DrugBank" id="DB03798">
    <property type="generic name" value="2'-Deoxycytidine-5'-Monophosphate"/>
</dbReference>
<dbReference type="DrugBank" id="DB06860">
    <property type="generic name" value="2-(2-chloropyridin-4-yl)-4-methyl-1H-isoindole-1,3(2H)-dione"/>
</dbReference>
<dbReference type="DrugBank" id="DB07507">
    <property type="generic name" value="2-(4-hydroxybiphenyl-3-yl)-4-methyl-1H-isoindole-1,3(2H)-dione"/>
</dbReference>
<dbReference type="DrugBank" id="DB08204">
    <property type="generic name" value="3-DIPHENOL-6-NITRO-3H-BENZO[DE]ISOCHROMEN-1-ONE"/>
</dbReference>
<dbReference type="DrugBank" id="DB07511">
    <property type="generic name" value="4-(4-methyl-1,3-dioxo-1,3-dihydro-2H-isoindol-2-yl)benzonitrile"/>
</dbReference>
<dbReference type="DrugBank" id="DB02301">
    <property type="generic name" value="5,10-Methylene-6-Hydrofolic Acid"/>
</dbReference>
<dbReference type="DrugBank" id="DB03761">
    <property type="generic name" value="5-fluoro-2'-deoxyuridine-5'-monophosphate"/>
</dbReference>
<dbReference type="DrugBank" id="DB03800">
    <property type="generic name" value="Deoxyuridine monophosphate"/>
</dbReference>
<dbReference type="DrugBank" id="DB01643">
    <property type="generic name" value="Thymidine monophosphate"/>
</dbReference>
<dbReference type="DrugBank" id="DB03685">
    <property type="generic name" value="Uridine monophosphate"/>
</dbReference>
<dbReference type="DrugCentral" id="P00469"/>
<dbReference type="eggNOG" id="COG0207">
    <property type="taxonomic scope" value="Bacteria"/>
</dbReference>
<dbReference type="SABIO-RK" id="P00469"/>
<dbReference type="UniPathway" id="UPA00575"/>
<dbReference type="EvolutionaryTrace" id="P00469"/>
<dbReference type="GO" id="GO:0005829">
    <property type="term" value="C:cytosol"/>
    <property type="evidence" value="ECO:0007669"/>
    <property type="project" value="TreeGrafter"/>
</dbReference>
<dbReference type="GO" id="GO:0004799">
    <property type="term" value="F:thymidylate synthase activity"/>
    <property type="evidence" value="ECO:0007669"/>
    <property type="project" value="UniProtKB-UniRule"/>
</dbReference>
<dbReference type="GO" id="GO:0006231">
    <property type="term" value="P:dTMP biosynthetic process"/>
    <property type="evidence" value="ECO:0007669"/>
    <property type="project" value="UniProtKB-UniRule"/>
</dbReference>
<dbReference type="GO" id="GO:0006235">
    <property type="term" value="P:dTTP biosynthetic process"/>
    <property type="evidence" value="ECO:0007669"/>
    <property type="project" value="UniProtKB-UniRule"/>
</dbReference>
<dbReference type="GO" id="GO:0032259">
    <property type="term" value="P:methylation"/>
    <property type="evidence" value="ECO:0007669"/>
    <property type="project" value="UniProtKB-KW"/>
</dbReference>
<dbReference type="CDD" id="cd00351">
    <property type="entry name" value="TS_Pyrimidine_HMase"/>
    <property type="match status" value="1"/>
</dbReference>
<dbReference type="Gene3D" id="3.30.572.10">
    <property type="entry name" value="Thymidylate synthase/dCMP hydroxymethylase domain"/>
    <property type="match status" value="1"/>
</dbReference>
<dbReference type="HAMAP" id="MF_00008">
    <property type="entry name" value="Thymidy_synth_bact"/>
    <property type="match status" value="1"/>
</dbReference>
<dbReference type="InterPro" id="IPR045097">
    <property type="entry name" value="Thymidate_synth/dCMP_Mease"/>
</dbReference>
<dbReference type="InterPro" id="IPR023451">
    <property type="entry name" value="Thymidate_synth/dCMP_Mease_dom"/>
</dbReference>
<dbReference type="InterPro" id="IPR036926">
    <property type="entry name" value="Thymidate_synth/dCMP_Mease_sf"/>
</dbReference>
<dbReference type="InterPro" id="IPR000398">
    <property type="entry name" value="Thymidylate_synthase"/>
</dbReference>
<dbReference type="InterPro" id="IPR020940">
    <property type="entry name" value="Thymidylate_synthase_AS"/>
</dbReference>
<dbReference type="NCBIfam" id="NF002496">
    <property type="entry name" value="PRK01827.1-2"/>
    <property type="match status" value="1"/>
</dbReference>
<dbReference type="NCBIfam" id="TIGR03284">
    <property type="entry name" value="thym_sym"/>
    <property type="match status" value="1"/>
</dbReference>
<dbReference type="PANTHER" id="PTHR11548:SF9">
    <property type="entry name" value="THYMIDYLATE SYNTHASE"/>
    <property type="match status" value="1"/>
</dbReference>
<dbReference type="PANTHER" id="PTHR11548">
    <property type="entry name" value="THYMIDYLATE SYNTHASE 1"/>
    <property type="match status" value="1"/>
</dbReference>
<dbReference type="Pfam" id="PF00303">
    <property type="entry name" value="Thymidylat_synt"/>
    <property type="match status" value="1"/>
</dbReference>
<dbReference type="PRINTS" id="PR00108">
    <property type="entry name" value="THYMDSNTHASE"/>
</dbReference>
<dbReference type="SUPFAM" id="SSF55831">
    <property type="entry name" value="Thymidylate synthase/dCMP hydroxymethylase"/>
    <property type="match status" value="1"/>
</dbReference>
<dbReference type="PROSITE" id="PS00091">
    <property type="entry name" value="THYMIDYLATE_SYNTHASE"/>
    <property type="match status" value="1"/>
</dbReference>
<proteinExistence type="evidence at protein level"/>
<sequence length="316" mass="36580">MLEQPYLDLAKKVLDEGHFKPDRTHTGTYSIFGHQMRFDLSKGFPLLTTKKVPFGLIKSELLWFLHGDTNIRFLLQHRNHIWDEWAFEKWVKSDEYHGPDMTDFGHRSQKDPEFAAVYHEEMAKFDDRVLHDDAFAAKYGDLGLVYGSQWRAWHTSKGDTIDQLGDVIEQIKTHPYSRRLIVSAWNPEDVPTMALPPCHTLYQFYVNDGKLSLQLYQRSADIFLGVPFNIASYALLTHLVAHECGLEVGEFIHTFGDAHLYVNHLDQIKEQLSRTPRPAPTLQLNPDKHDIFDFDMKDIKLLNYDPYPAIKAPVAV</sequence>
<name>TYSY_LACCA</name>
<evidence type="ECO:0000255" key="1">
    <source>
        <dbReference type="HAMAP-Rule" id="MF_00008"/>
    </source>
</evidence>
<evidence type="ECO:0000305" key="2"/>
<evidence type="ECO:0007829" key="3">
    <source>
        <dbReference type="PDB" id="1JMG"/>
    </source>
</evidence>
<evidence type="ECO:0007829" key="4">
    <source>
        <dbReference type="PDB" id="1LCB"/>
    </source>
</evidence>
<evidence type="ECO:0007829" key="5">
    <source>
        <dbReference type="PDB" id="1VZC"/>
    </source>
</evidence>
<evidence type="ECO:0007829" key="6">
    <source>
        <dbReference type="PDB" id="2G8D"/>
    </source>
</evidence>
<evidence type="ECO:0007829" key="7">
    <source>
        <dbReference type="PDB" id="3BNZ"/>
    </source>
</evidence>
<evidence type="ECO:0007829" key="8">
    <source>
        <dbReference type="PDB" id="3IK0"/>
    </source>
</evidence>
<comment type="function">
    <text evidence="1">Catalyzes the reductive methylation of 2'-deoxyuridine-5'-monophosphate (dUMP) to 2'-deoxythymidine-5'-monophosphate (dTMP) while utilizing 5,10-methylenetetrahydrofolate (mTHF) as the methyl donor and reductant in the reaction, yielding dihydrofolate (DHF) as a by-product. This enzymatic reaction provides an intracellular de novo source of dTMP, an essential precursor for DNA biosynthesis.</text>
</comment>
<comment type="catalytic activity">
    <reaction evidence="1">
        <text>dUMP + (6R)-5,10-methylene-5,6,7,8-tetrahydrofolate = 7,8-dihydrofolate + dTMP</text>
        <dbReference type="Rhea" id="RHEA:12104"/>
        <dbReference type="ChEBI" id="CHEBI:15636"/>
        <dbReference type="ChEBI" id="CHEBI:57451"/>
        <dbReference type="ChEBI" id="CHEBI:63528"/>
        <dbReference type="ChEBI" id="CHEBI:246422"/>
        <dbReference type="EC" id="2.1.1.45"/>
    </reaction>
</comment>
<comment type="pathway">
    <text evidence="1">Pyrimidine metabolism; dTTP biosynthesis.</text>
</comment>
<comment type="subunit">
    <text evidence="1">Homodimer.</text>
</comment>
<comment type="subcellular location">
    <subcellularLocation>
        <location evidence="1">Cytoplasm</location>
    </subcellularLocation>
</comment>
<comment type="similarity">
    <text evidence="1">Belongs to the thymidylate synthase family. Bacterial-type ThyA subfamily.</text>
</comment>
<comment type="sequence caution" evidence="2">
    <conflict type="erroneous initiation">
        <sequence resource="EMBL-CDS" id="AAA25255"/>
    </conflict>
</comment>
<protein>
    <recommendedName>
        <fullName evidence="1">Thymidylate synthase</fullName>
        <shortName evidence="1">TS</shortName>
        <shortName evidence="1">TSase</shortName>
        <ecNumber evidence="1">2.1.1.45</ecNumber>
    </recommendedName>
</protein>
<keyword id="KW-0002">3D-structure</keyword>
<keyword id="KW-0963">Cytoplasm</keyword>
<keyword id="KW-0903">Direct protein sequencing</keyword>
<keyword id="KW-0489">Methyltransferase</keyword>
<keyword id="KW-0545">Nucleotide biosynthesis</keyword>
<keyword id="KW-0808">Transferase</keyword>
<accession>P00469</accession>
<reference key="1">
    <citation type="journal article" date="1988" name="DNA">
        <title>Cloning, sequencing, and expression of the Lactobacillus casei thymidylate synthase gene.</title>
        <authorList>
            <person name="Pinter K."/>
            <person name="Davisson V.J."/>
            <person name="Santi D.V."/>
        </authorList>
    </citation>
    <scope>NUCLEOTIDE SEQUENCE [GENOMIC DNA]</scope>
</reference>
<reference key="2">
    <citation type="journal article" date="1979" name="J. Biol. Chem.">
        <title>The primary structure of Lactobacillus casei thymidylate synthetase. III. The use of 2-(2-nitrophenylsulfenyl)-3-methyl-3-bromoindolenine and limited tryptic peptides to establish the complete amino acid sequence of the enzyme.</title>
        <authorList>
            <person name="Maley G.F."/>
            <person name="Bellisario R.L."/>
            <person name="Guarino D.U."/>
            <person name="Maley F."/>
        </authorList>
    </citation>
    <scope>PROTEIN SEQUENCE</scope>
</reference>
<reference key="3">
    <citation type="journal article" date="1990" name="Proteins">
        <title>Plastic adaptation toward mutations in proteins: structural comparison of thymidylate synthases.</title>
        <authorList>
            <person name="Perry K.M."/>
            <person name="Fauman E.B."/>
            <person name="Finer-Moore J.S."/>
            <person name="Montfort W.R."/>
            <person name="Maley G.F."/>
            <person name="Maley F."/>
            <person name="Stroud R.M."/>
        </authorList>
    </citation>
    <scope>X-RAY CRYSTALLOGRAPHY (2.35 ANGSTROMS)</scope>
</reference>
<reference key="4">
    <citation type="journal article" date="1993" name="J. Mol. Biol.">
        <title>Refined structures of substrate-bound and phosphate-bound thymidylate synthase from Lactobacillus casei.</title>
        <authorList>
            <person name="Finer-Moore J.S."/>
            <person name="Fauman E.B."/>
            <person name="Foster P.G."/>
            <person name="Perry K.M."/>
            <person name="Santi D.V."/>
            <person name="Stroud R.M."/>
        </authorList>
    </citation>
    <scope>X-RAY CRYSTALLOGRAPHY (2.55 ANGSTROMS)</scope>
</reference>
<reference key="5">
    <citation type="journal article" date="1995" name="Chem. Biol.">
        <title>Role of the conserved tryptophan 82 of Lactobacillus casei thymidylate synthase.</title>
        <authorList>
            <person name="Kealey J.T."/>
            <person name="Eckstein J."/>
            <person name="Santi D.V."/>
        </authorList>
    </citation>
    <scope>MUTAGENESIS OF TYR-82</scope>
</reference>
<feature type="chain" id="PRO_0000140967" description="Thymidylate synthase">
    <location>
        <begin position="1"/>
        <end position="316"/>
    </location>
</feature>
<feature type="active site" description="Nucleophile" evidence="1">
    <location>
        <position position="198"/>
    </location>
</feature>
<feature type="binding site" description="in other chain" evidence="1">
    <location>
        <position position="23"/>
    </location>
    <ligand>
        <name>dUMP</name>
        <dbReference type="ChEBI" id="CHEBI:246422"/>
        <note>ligand shared between dimeric partners</note>
    </ligand>
</feature>
<feature type="binding site" evidence="1">
    <location>
        <begin position="178"/>
        <end position="179"/>
    </location>
    <ligand>
        <name>dUMP</name>
        <dbReference type="ChEBI" id="CHEBI:246422"/>
        <note>ligand shared between dimeric partners</note>
    </ligand>
</feature>
<feature type="binding site" description="in other chain" evidence="1">
    <location>
        <begin position="218"/>
        <end position="221"/>
    </location>
    <ligand>
        <name>dUMP</name>
        <dbReference type="ChEBI" id="CHEBI:246422"/>
        <note>ligand shared between dimeric partners</note>
    </ligand>
</feature>
<feature type="binding site" evidence="1">
    <location>
        <position position="221"/>
    </location>
    <ligand>
        <name>(6R)-5,10-methylene-5,6,7,8-tetrahydrofolate</name>
        <dbReference type="ChEBI" id="CHEBI:15636"/>
    </ligand>
</feature>
<feature type="binding site" description="in other chain" evidence="1">
    <location>
        <position position="229"/>
    </location>
    <ligand>
        <name>dUMP</name>
        <dbReference type="ChEBI" id="CHEBI:246422"/>
        <note>ligand shared between dimeric partners</note>
    </ligand>
</feature>
<feature type="binding site" description="in other chain" evidence="1">
    <location>
        <begin position="259"/>
        <end position="261"/>
    </location>
    <ligand>
        <name>dUMP</name>
        <dbReference type="ChEBI" id="CHEBI:246422"/>
        <note>ligand shared between dimeric partners</note>
    </ligand>
</feature>
<feature type="binding site" evidence="1">
    <location>
        <position position="315"/>
    </location>
    <ligand>
        <name>(6R)-5,10-methylene-5,6,7,8-tetrahydrofolate</name>
        <dbReference type="ChEBI" id="CHEBI:15636"/>
    </ligand>
</feature>
<feature type="helix" evidence="8">
    <location>
        <begin position="4"/>
        <end position="16"/>
    </location>
</feature>
<feature type="strand" evidence="8">
    <location>
        <begin position="18"/>
        <end position="22"/>
    </location>
</feature>
<feature type="turn" evidence="8">
    <location>
        <begin position="23"/>
        <end position="25"/>
    </location>
</feature>
<feature type="strand" evidence="8">
    <location>
        <begin position="26"/>
        <end position="33"/>
    </location>
</feature>
<feature type="strand" evidence="8">
    <location>
        <begin position="35"/>
        <end position="39"/>
    </location>
</feature>
<feature type="helix" evidence="8">
    <location>
        <begin position="40"/>
        <end position="42"/>
    </location>
</feature>
<feature type="strand" evidence="8">
    <location>
        <begin position="48"/>
        <end position="50"/>
    </location>
</feature>
<feature type="helix" evidence="8">
    <location>
        <begin position="54"/>
        <end position="65"/>
    </location>
</feature>
<feature type="helix" evidence="8">
    <location>
        <begin position="71"/>
        <end position="75"/>
    </location>
</feature>
<feature type="turn" evidence="8">
    <location>
        <begin position="76"/>
        <end position="78"/>
    </location>
</feature>
<feature type="helix" evidence="8">
    <location>
        <begin position="83"/>
        <end position="90"/>
    </location>
</feature>
<feature type="strand" evidence="8">
    <location>
        <begin position="93"/>
        <end position="95"/>
    </location>
</feature>
<feature type="strand" evidence="5">
    <location>
        <begin position="98"/>
        <end position="100"/>
    </location>
</feature>
<feature type="helix" evidence="5">
    <location>
        <begin position="101"/>
        <end position="103"/>
    </location>
</feature>
<feature type="helix" evidence="8">
    <location>
        <begin position="104"/>
        <end position="110"/>
    </location>
</feature>
<feature type="helix" evidence="8">
    <location>
        <begin position="112"/>
        <end position="131"/>
    </location>
</feature>
<feature type="helix" evidence="8">
    <location>
        <begin position="133"/>
        <end position="139"/>
    </location>
</feature>
<feature type="strand" evidence="8">
    <location>
        <begin position="143"/>
        <end position="145"/>
    </location>
</feature>
<feature type="helix" evidence="8">
    <location>
        <begin position="146"/>
        <end position="151"/>
    </location>
</feature>
<feature type="strand" evidence="7">
    <location>
        <begin position="152"/>
        <end position="154"/>
    </location>
</feature>
<feature type="strand" evidence="6">
    <location>
        <begin position="156"/>
        <end position="158"/>
    </location>
</feature>
<feature type="helix" evidence="8">
    <location>
        <begin position="163"/>
        <end position="173"/>
    </location>
</feature>
<feature type="strand" evidence="4">
    <location>
        <begin position="174"/>
        <end position="176"/>
    </location>
</feature>
<feature type="strand" evidence="8">
    <location>
        <begin position="181"/>
        <end position="183"/>
    </location>
</feature>
<feature type="turn" evidence="8">
    <location>
        <begin position="187"/>
        <end position="192"/>
    </location>
</feature>
<feature type="strand" evidence="8">
    <location>
        <begin position="193"/>
        <end position="195"/>
    </location>
</feature>
<feature type="strand" evidence="8">
    <location>
        <begin position="198"/>
        <end position="207"/>
    </location>
</feature>
<feature type="strand" evidence="8">
    <location>
        <begin position="210"/>
        <end position="221"/>
    </location>
</feature>
<feature type="turn" evidence="8">
    <location>
        <begin position="222"/>
        <end position="224"/>
    </location>
</feature>
<feature type="helix" evidence="8">
    <location>
        <begin position="225"/>
        <end position="244"/>
    </location>
</feature>
<feature type="strand" evidence="8">
    <location>
        <begin position="247"/>
        <end position="261"/>
    </location>
</feature>
<feature type="helix" evidence="3">
    <location>
        <begin position="262"/>
        <end position="264"/>
    </location>
</feature>
<feature type="helix" evidence="8">
    <location>
        <begin position="265"/>
        <end position="271"/>
    </location>
</feature>
<feature type="strand" evidence="8">
    <location>
        <begin position="281"/>
        <end position="284"/>
    </location>
</feature>
<feature type="helix" evidence="8">
    <location>
        <begin position="291"/>
        <end position="293"/>
    </location>
</feature>
<feature type="helix" evidence="8">
    <location>
        <begin position="296"/>
        <end position="298"/>
    </location>
</feature>
<feature type="strand" evidence="8">
    <location>
        <begin position="299"/>
        <end position="302"/>
    </location>
</feature>
<organism>
    <name type="scientific">Lacticaseibacillus casei</name>
    <name type="common">Lactobacillus casei</name>
    <dbReference type="NCBI Taxonomy" id="1582"/>
    <lineage>
        <taxon>Bacteria</taxon>
        <taxon>Bacillati</taxon>
        <taxon>Bacillota</taxon>
        <taxon>Bacilli</taxon>
        <taxon>Lactobacillales</taxon>
        <taxon>Lactobacillaceae</taxon>
        <taxon>Lacticaseibacillus</taxon>
    </lineage>
</organism>
<gene>
    <name evidence="1" type="primary">thyA</name>
</gene>